<protein>
    <recommendedName>
        <fullName evidence="1">Eukaryotic translation initiation factor 3 subunit J</fullName>
        <shortName evidence="1">eIF3j</shortName>
    </recommendedName>
</protein>
<organism>
    <name type="scientific">Drosophila simulans</name>
    <name type="common">Fruit fly</name>
    <dbReference type="NCBI Taxonomy" id="7240"/>
    <lineage>
        <taxon>Eukaryota</taxon>
        <taxon>Metazoa</taxon>
        <taxon>Ecdysozoa</taxon>
        <taxon>Arthropoda</taxon>
        <taxon>Hexapoda</taxon>
        <taxon>Insecta</taxon>
        <taxon>Pterygota</taxon>
        <taxon>Neoptera</taxon>
        <taxon>Endopterygota</taxon>
        <taxon>Diptera</taxon>
        <taxon>Brachycera</taxon>
        <taxon>Muscomorpha</taxon>
        <taxon>Ephydroidea</taxon>
        <taxon>Drosophilidae</taxon>
        <taxon>Drosophila</taxon>
        <taxon>Sophophora</taxon>
    </lineage>
</organism>
<evidence type="ECO:0000255" key="1">
    <source>
        <dbReference type="HAMAP-Rule" id="MF_03009"/>
    </source>
</evidence>
<evidence type="ECO:0000256" key="2">
    <source>
        <dbReference type="SAM" id="MobiDB-lite"/>
    </source>
</evidence>
<keyword id="KW-0963">Cytoplasm</keyword>
<keyword id="KW-0396">Initiation factor</keyword>
<keyword id="KW-0648">Protein biosynthesis</keyword>
<keyword id="KW-1185">Reference proteome</keyword>
<proteinExistence type="inferred from homology"/>
<dbReference type="EMBL" id="CM000362">
    <property type="protein sequence ID" value="EDX06429.1"/>
    <property type="molecule type" value="Genomic_DNA"/>
</dbReference>
<dbReference type="SMR" id="B4QHU5"/>
<dbReference type="STRING" id="7240.B4QHU5"/>
<dbReference type="EnsemblMetazoa" id="FBtr0210614">
    <property type="protein sequence ID" value="FBpp0209106"/>
    <property type="gene ID" value="FBgn0182469"/>
</dbReference>
<dbReference type="EnsemblMetazoa" id="XM_002080808.4">
    <property type="protein sequence ID" value="XP_002080844.1"/>
    <property type="gene ID" value="LOC6733800"/>
</dbReference>
<dbReference type="GeneID" id="6733800"/>
<dbReference type="CTD" id="8669"/>
<dbReference type="HOGENOM" id="CLU_085806_2_0_1"/>
<dbReference type="OMA" id="KPHYALW"/>
<dbReference type="OrthoDB" id="20381at2759"/>
<dbReference type="PhylomeDB" id="B4QHU5"/>
<dbReference type="ChiTaRS" id="Adam">
    <property type="organism name" value="fly"/>
</dbReference>
<dbReference type="Proteomes" id="UP000000304">
    <property type="component" value="Chromosome 2R"/>
</dbReference>
<dbReference type="Bgee" id="FBgn0182469">
    <property type="expression patterns" value="Expressed in embryo and 3 other cell types or tissues"/>
</dbReference>
<dbReference type="GO" id="GO:0016282">
    <property type="term" value="C:eukaryotic 43S preinitiation complex"/>
    <property type="evidence" value="ECO:0007669"/>
    <property type="project" value="UniProtKB-UniRule"/>
</dbReference>
<dbReference type="GO" id="GO:0033290">
    <property type="term" value="C:eukaryotic 48S preinitiation complex"/>
    <property type="evidence" value="ECO:0007669"/>
    <property type="project" value="UniProtKB-UniRule"/>
</dbReference>
<dbReference type="GO" id="GO:0005852">
    <property type="term" value="C:eukaryotic translation initiation factor 3 complex"/>
    <property type="evidence" value="ECO:0007669"/>
    <property type="project" value="UniProtKB-UniRule"/>
</dbReference>
<dbReference type="GO" id="GO:0003743">
    <property type="term" value="F:translation initiation factor activity"/>
    <property type="evidence" value="ECO:0007669"/>
    <property type="project" value="UniProtKB-UniRule"/>
</dbReference>
<dbReference type="GO" id="GO:0001732">
    <property type="term" value="P:formation of cytoplasmic translation initiation complex"/>
    <property type="evidence" value="ECO:0007669"/>
    <property type="project" value="UniProtKB-UniRule"/>
</dbReference>
<dbReference type="GO" id="GO:0006446">
    <property type="term" value="P:regulation of translational initiation"/>
    <property type="evidence" value="ECO:0007669"/>
    <property type="project" value="EnsemblMetazoa"/>
</dbReference>
<dbReference type="Gene3D" id="1.10.246.60">
    <property type="entry name" value="Eukaryotic translation initiation factor 3 like domains"/>
    <property type="match status" value="1"/>
</dbReference>
<dbReference type="HAMAP" id="MF_03009">
    <property type="entry name" value="eIF3j"/>
    <property type="match status" value="1"/>
</dbReference>
<dbReference type="InterPro" id="IPR023194">
    <property type="entry name" value="eIF3-like_dom_sf"/>
</dbReference>
<dbReference type="InterPro" id="IPR013906">
    <property type="entry name" value="eIF3j"/>
</dbReference>
<dbReference type="PANTHER" id="PTHR21681">
    <property type="entry name" value="EUKARYOTIC TRANSLATION INITIATION FACTOR 3 SUBUNIT J"/>
    <property type="match status" value="1"/>
</dbReference>
<dbReference type="PANTHER" id="PTHR21681:SF0">
    <property type="entry name" value="EUKARYOTIC TRANSLATION INITIATION FACTOR 3 SUBUNIT J"/>
    <property type="match status" value="1"/>
</dbReference>
<dbReference type="Pfam" id="PF08597">
    <property type="entry name" value="eIF3_subunit"/>
    <property type="match status" value="1"/>
</dbReference>
<accession>B4QHU5</accession>
<reference key="1">
    <citation type="journal article" date="2007" name="Nature">
        <title>Evolution of genes and genomes on the Drosophila phylogeny.</title>
        <authorList>
            <consortium name="Drosophila 12 genomes consortium"/>
        </authorList>
    </citation>
    <scope>NUCLEOTIDE SEQUENCE [LARGE SCALE GENOMIC DNA]</scope>
</reference>
<comment type="function">
    <text evidence="1">Component of the eukaryotic translation initiation factor 3 (eIF-3) complex, which is involved in protein synthesis of a specialized repertoire of mRNAs and, together with other initiation factors, stimulates binding of mRNA and methionyl-tRNAi to the 40S ribosome. The eIF-3 complex specifically targets and initiates translation of a subset of mRNAs involved in cell proliferation.</text>
</comment>
<comment type="subunit">
    <text evidence="1">Component of the eukaryotic translation initiation factor 3 (eIF-3) complex. The eIF-3 complex interacts with pix.</text>
</comment>
<comment type="subcellular location">
    <subcellularLocation>
        <location evidence="1">Cytoplasm</location>
    </subcellularLocation>
</comment>
<comment type="similarity">
    <text evidence="1">Belongs to the eIF-3 subunit J family.</text>
</comment>
<feature type="chain" id="PRO_0000365140" description="Eukaryotic translation initiation factor 3 subunit J">
    <location>
        <begin position="1"/>
        <end position="236"/>
    </location>
</feature>
<feature type="region of interest" description="Disordered" evidence="2">
    <location>
        <begin position="1"/>
        <end position="84"/>
    </location>
</feature>
<feature type="compositionally biased region" description="Acidic residues" evidence="2">
    <location>
        <begin position="28"/>
        <end position="46"/>
    </location>
</feature>
<feature type="compositionally biased region" description="Basic and acidic residues" evidence="2">
    <location>
        <begin position="47"/>
        <end position="58"/>
    </location>
</feature>
<feature type="compositionally biased region" description="Basic and acidic residues" evidence="2">
    <location>
        <begin position="68"/>
        <end position="77"/>
    </location>
</feature>
<sequence>MADDWESAADSDVVIRPTAAASVNKWEGEDEDEDIKDSWEDEEEKKDEEKPTKTEAPAKPKPNKALKAKLEQQALREEEAEAERLANLSPAEKLAEKLRLQKIQEASDLKHAQEAFGVTSTCGGLDAFNPETKEEFKEFGATLSWKVAQFRESEHFPQFVEDLVRSLCVNLSAADIKKVKMNVEVLHSEKLKLEKANAKKPAGKGKGKVTLRTENDDIDGYQKYGNDFTEDYDDFM</sequence>
<name>EIF3J_DROSI</name>
<gene>
    <name evidence="1" type="primary">eIF3j</name>
    <name evidence="1" type="synonym">Adam</name>
    <name type="ORF">GD10704</name>
</gene>